<proteinExistence type="inferred from homology"/>
<evidence type="ECO:0000250" key="1">
    <source>
        <dbReference type="UniProtKB" id="P68712"/>
    </source>
</evidence>
<evidence type="ECO:0000255" key="2"/>
<evidence type="ECO:0000305" key="3"/>
<sequence length="117" mass="13645">MITLFLILCYFILIFNIIVPAISEKMRRERAAYVNYKRLNKNFICVDDRLFSYNFTTSGIKAKVAVDNKNVPIPCSKINEVNNNKDVDTLYCDKDRDDIPGFARSCYRAYSDLFFTT</sequence>
<gene>
    <name type="primary">OPG147</name>
    <name type="ORF">A21L</name>
</gene>
<keyword id="KW-1015">Disulfide bond</keyword>
<keyword id="KW-1168">Fusion of virus membrane with host membrane</keyword>
<keyword id="KW-0472">Membrane</keyword>
<keyword id="KW-0597">Phosphoprotein</keyword>
<keyword id="KW-1185">Reference proteome</keyword>
<keyword id="KW-0735">Signal-anchor</keyword>
<keyword id="KW-0812">Transmembrane</keyword>
<keyword id="KW-1133">Transmembrane helix</keyword>
<keyword id="KW-0261">Viral envelope protein</keyword>
<keyword id="KW-1162">Viral penetration into host cytoplasm</keyword>
<keyword id="KW-0946">Virion</keyword>
<keyword id="KW-1160">Virus entry into host cell</keyword>
<organism>
    <name type="scientific">Vaccinia virus (strain Copenhagen)</name>
    <name type="common">VACV</name>
    <dbReference type="NCBI Taxonomy" id="10249"/>
    <lineage>
        <taxon>Viruses</taxon>
        <taxon>Varidnaviria</taxon>
        <taxon>Bamfordvirae</taxon>
        <taxon>Nucleocytoviricota</taxon>
        <taxon>Pokkesviricetes</taxon>
        <taxon>Chitovirales</taxon>
        <taxon>Poxviridae</taxon>
        <taxon>Chordopoxvirinae</taxon>
        <taxon>Orthopoxvirus</taxon>
        <taxon>Vaccinia virus</taxon>
    </lineage>
</organism>
<name>PG147_VACCC</name>
<reference key="1">
    <citation type="journal article" date="1990" name="Virology">
        <title>The complete DNA sequence of vaccinia virus.</title>
        <authorList>
            <person name="Goebel S.J."/>
            <person name="Johnson G.P."/>
            <person name="Perkus M.E."/>
            <person name="Davis S.W."/>
            <person name="Winslow J.P."/>
            <person name="Paoletti E."/>
        </authorList>
    </citation>
    <scope>NUCLEOTIDE SEQUENCE [LARGE SCALE GENOMIC DNA]</scope>
</reference>
<reference key="2">
    <citation type="journal article" date="1990" name="Virology">
        <title>Appendix to 'The complete DNA sequence of vaccinia virus'.</title>
        <authorList>
            <person name="Goebel S.J."/>
            <person name="Johnson G.P."/>
            <person name="Perkus M.E."/>
            <person name="Davis S.W."/>
            <person name="Winslow J.P."/>
            <person name="Paoletti E."/>
        </authorList>
    </citation>
    <scope>NUCLEOTIDE SEQUENCE [LARGE SCALE GENOMIC DNA]</scope>
</reference>
<feature type="chain" id="PRO_0000099271" description="Virion membrane protein OPG147">
    <location>
        <begin position="1"/>
        <end position="117"/>
    </location>
</feature>
<feature type="transmembrane region" description="Helical; Signal-anchor for type III membrane protein" evidence="2">
    <location>
        <begin position="1"/>
        <end position="21"/>
    </location>
</feature>
<feature type="topological domain" description="Virion surface" evidence="2">
    <location>
        <begin position="22"/>
        <end position="117"/>
    </location>
</feature>
<dbReference type="EMBL" id="M35027">
    <property type="protein sequence ID" value="AAA48142.1"/>
    <property type="molecule type" value="Genomic_DNA"/>
</dbReference>
<dbReference type="PIR" id="E42519">
    <property type="entry name" value="E42519"/>
</dbReference>
<dbReference type="SMR" id="P20996"/>
<dbReference type="DIP" id="DIP-2188N"/>
<dbReference type="IntAct" id="P20996">
    <property type="interactions" value="1"/>
</dbReference>
<dbReference type="MINT" id="P20996"/>
<dbReference type="Proteomes" id="UP000008269">
    <property type="component" value="Segment"/>
</dbReference>
<dbReference type="GO" id="GO:0016020">
    <property type="term" value="C:membrane"/>
    <property type="evidence" value="ECO:0007669"/>
    <property type="project" value="UniProtKB-KW"/>
</dbReference>
<dbReference type="GO" id="GO:0019031">
    <property type="term" value="C:viral envelope"/>
    <property type="evidence" value="ECO:0007669"/>
    <property type="project" value="UniProtKB-KW"/>
</dbReference>
<dbReference type="GO" id="GO:0055036">
    <property type="term" value="C:virion membrane"/>
    <property type="evidence" value="ECO:0007669"/>
    <property type="project" value="UniProtKB-SubCell"/>
</dbReference>
<dbReference type="GO" id="GO:0039663">
    <property type="term" value="P:membrane fusion involved in viral entry into host cell"/>
    <property type="evidence" value="ECO:0007669"/>
    <property type="project" value="UniProtKB-KW"/>
</dbReference>
<dbReference type="GO" id="GO:0046718">
    <property type="term" value="P:symbiont entry into host cell"/>
    <property type="evidence" value="ECO:0007669"/>
    <property type="project" value="UniProtKB-KW"/>
</dbReference>
<dbReference type="InterPro" id="IPR007987">
    <property type="entry name" value="Poxvirus_A21"/>
</dbReference>
<dbReference type="Pfam" id="PF05323">
    <property type="entry name" value="Pox_A21"/>
    <property type="match status" value="1"/>
</dbReference>
<comment type="function">
    <text evidence="1">Envelope protein part of the entry-fusion complex responsible for the virus membrane fusion with host cell membrane during virus entry. Also plays a role in cell-cell fusion (syncytium formation).</text>
</comment>
<comment type="subunit">
    <text evidence="1">Part of a stable entry-fusion complex (EFC) which is at least composed of proteins OPG143, OPG147, OPG155, OPG086, OPG094, OPG107, OPG104, and OPG099. Formation of the viral membrane is necessary for the assembly of the complex.</text>
</comment>
<comment type="subcellular location">
    <subcellularLocation>
        <location evidence="1">Virion membrane</location>
        <topology evidence="1">Single-pass type III membrane protein</topology>
    </subcellularLocation>
    <text evidence="1">Component of the mature virion (MV) membrane. The mature virion is located in the cytoplasm of infected cells and is probably released by cell lysis.</text>
</comment>
<comment type="PTM">
    <text evidence="1">Contains two intramolecular disulfide bonds. They are created by the viral disulfide bond formation pathway, a poxvirus-specific pathway that operates on the cytoplasmic side of the MV membranes.</text>
</comment>
<comment type="similarity">
    <text evidence="3">Belongs to the orthopoxvirus OPG147 family.</text>
</comment>
<protein>
    <recommendedName>
        <fullName>Virion membrane protein OPG147</fullName>
    </recommendedName>
</protein>
<organismHost>
    <name type="scientific">Homo sapiens</name>
    <name type="common">Human</name>
    <dbReference type="NCBI Taxonomy" id="9606"/>
</organismHost>
<accession>P20996</accession>